<organism>
    <name type="scientific">Alteromonas mediterranea (strain DSM 17117 / CIP 110805 / LMG 28347 / Deep ecotype)</name>
    <dbReference type="NCBI Taxonomy" id="1774373"/>
    <lineage>
        <taxon>Bacteria</taxon>
        <taxon>Pseudomonadati</taxon>
        <taxon>Pseudomonadota</taxon>
        <taxon>Gammaproteobacteria</taxon>
        <taxon>Alteromonadales</taxon>
        <taxon>Alteromonadaceae</taxon>
        <taxon>Alteromonas/Salinimonas group</taxon>
        <taxon>Alteromonas</taxon>
    </lineage>
</organism>
<feature type="chain" id="PRO_0000381852" description="tRNA U34 carboxymethyltransferase">
    <location>
        <begin position="1"/>
        <end position="332"/>
    </location>
</feature>
<feature type="binding site" evidence="1">
    <location>
        <position position="96"/>
    </location>
    <ligand>
        <name>carboxy-S-adenosyl-L-methionine</name>
        <dbReference type="ChEBI" id="CHEBI:134278"/>
    </ligand>
</feature>
<feature type="binding site" evidence="1">
    <location>
        <position position="110"/>
    </location>
    <ligand>
        <name>carboxy-S-adenosyl-L-methionine</name>
        <dbReference type="ChEBI" id="CHEBI:134278"/>
    </ligand>
</feature>
<feature type="binding site" evidence="1">
    <location>
        <position position="115"/>
    </location>
    <ligand>
        <name>carboxy-S-adenosyl-L-methionine</name>
        <dbReference type="ChEBI" id="CHEBI:134278"/>
    </ligand>
</feature>
<feature type="binding site" evidence="1">
    <location>
        <position position="135"/>
    </location>
    <ligand>
        <name>carboxy-S-adenosyl-L-methionine</name>
        <dbReference type="ChEBI" id="CHEBI:134278"/>
    </ligand>
</feature>
<feature type="binding site" evidence="1">
    <location>
        <begin position="157"/>
        <end position="159"/>
    </location>
    <ligand>
        <name>carboxy-S-adenosyl-L-methionine</name>
        <dbReference type="ChEBI" id="CHEBI:134278"/>
    </ligand>
</feature>
<feature type="binding site" evidence="1">
    <location>
        <begin position="190"/>
        <end position="191"/>
    </location>
    <ligand>
        <name>carboxy-S-adenosyl-L-methionine</name>
        <dbReference type="ChEBI" id="CHEBI:134278"/>
    </ligand>
</feature>
<feature type="binding site" evidence="1">
    <location>
        <position position="205"/>
    </location>
    <ligand>
        <name>carboxy-S-adenosyl-L-methionine</name>
        <dbReference type="ChEBI" id="CHEBI:134278"/>
    </ligand>
</feature>
<feature type="binding site" evidence="1">
    <location>
        <position position="209"/>
    </location>
    <ligand>
        <name>carboxy-S-adenosyl-L-methionine</name>
        <dbReference type="ChEBI" id="CHEBI:134278"/>
    </ligand>
</feature>
<feature type="binding site" evidence="1">
    <location>
        <position position="324"/>
    </location>
    <ligand>
        <name>carboxy-S-adenosyl-L-methionine</name>
        <dbReference type="ChEBI" id="CHEBI:134278"/>
    </ligand>
</feature>
<accession>B4S0J9</accession>
<accession>F2G3E9</accession>
<reference key="1">
    <citation type="journal article" date="2008" name="ISME J.">
        <title>Comparative genomics of two ecotypes of the marine planktonic copiotroph Alteromonas macleodii suggests alternative lifestyles associated with different kinds of particulate organic matter.</title>
        <authorList>
            <person name="Ivars-Martinez E."/>
            <person name="Martin-Cuadrado A.-B."/>
            <person name="D'Auria G."/>
            <person name="Mira A."/>
            <person name="Ferriera S."/>
            <person name="Johnson J."/>
            <person name="Friedman R."/>
            <person name="Rodriguez-Valera F."/>
        </authorList>
    </citation>
    <scope>NUCLEOTIDE SEQUENCE [LARGE SCALE GENOMIC DNA]</scope>
    <source>
        <strain>DSM 17117 / CIP 110805 / LMG 28347 / Deep ecotype</strain>
    </source>
</reference>
<dbReference type="EC" id="2.5.1.-" evidence="1"/>
<dbReference type="EMBL" id="CP001103">
    <property type="protein sequence ID" value="AEA98321.1"/>
    <property type="molecule type" value="Genomic_DNA"/>
</dbReference>
<dbReference type="RefSeq" id="WP_012518644.1">
    <property type="nucleotide sequence ID" value="NC_011138.3"/>
</dbReference>
<dbReference type="SMR" id="B4S0J9"/>
<dbReference type="KEGG" id="amc:MADE_1010915"/>
<dbReference type="HOGENOM" id="CLU_052665_0_0_6"/>
<dbReference type="Proteomes" id="UP000001870">
    <property type="component" value="Chromosome"/>
</dbReference>
<dbReference type="GO" id="GO:0016765">
    <property type="term" value="F:transferase activity, transferring alkyl or aryl (other than methyl) groups"/>
    <property type="evidence" value="ECO:0007669"/>
    <property type="project" value="UniProtKB-UniRule"/>
</dbReference>
<dbReference type="GO" id="GO:0002098">
    <property type="term" value="P:tRNA wobble uridine modification"/>
    <property type="evidence" value="ECO:0007669"/>
    <property type="project" value="InterPro"/>
</dbReference>
<dbReference type="CDD" id="cd02440">
    <property type="entry name" value="AdoMet_MTases"/>
    <property type="match status" value="1"/>
</dbReference>
<dbReference type="Gene3D" id="3.40.50.150">
    <property type="entry name" value="Vaccinia Virus protein VP39"/>
    <property type="match status" value="1"/>
</dbReference>
<dbReference type="HAMAP" id="MF_01590">
    <property type="entry name" value="tRNA_carboxymethyltr_CmoB"/>
    <property type="match status" value="1"/>
</dbReference>
<dbReference type="InterPro" id="IPR010017">
    <property type="entry name" value="CmoB"/>
</dbReference>
<dbReference type="InterPro" id="IPR027555">
    <property type="entry name" value="Mo5U34_MeTrfas-like"/>
</dbReference>
<dbReference type="InterPro" id="IPR029063">
    <property type="entry name" value="SAM-dependent_MTases_sf"/>
</dbReference>
<dbReference type="NCBIfam" id="NF011650">
    <property type="entry name" value="PRK15068.1"/>
    <property type="match status" value="1"/>
</dbReference>
<dbReference type="NCBIfam" id="TIGR00452">
    <property type="entry name" value="tRNA 5-methoxyuridine(34)/uridine 5-oxyacetic acid(34) synthase CmoB"/>
    <property type="match status" value="1"/>
</dbReference>
<dbReference type="PANTHER" id="PTHR43861">
    <property type="entry name" value="TRANS-ACONITATE 2-METHYLTRANSFERASE-RELATED"/>
    <property type="match status" value="1"/>
</dbReference>
<dbReference type="Pfam" id="PF08003">
    <property type="entry name" value="Methyltransf_9"/>
    <property type="match status" value="1"/>
</dbReference>
<dbReference type="SUPFAM" id="SSF53335">
    <property type="entry name" value="S-adenosyl-L-methionine-dependent methyltransferases"/>
    <property type="match status" value="1"/>
</dbReference>
<keyword id="KW-0808">Transferase</keyword>
<keyword id="KW-0819">tRNA processing</keyword>
<proteinExistence type="inferred from homology"/>
<gene>
    <name evidence="1" type="primary">cmoB</name>
    <name type="ordered locus">MADE_1010915</name>
</gene>
<sequence>MSKLEQTWFNECYTSLIDSPLAHWLQTLPALMDTWQRTAKHGEFDKWCRLLNKLPNTSPQQIDLSTSVTIGAKSDVDEYTQKQIEGLLRQFMPWRKGPFHVHGIHIDTEWRSDWKWDRVAPHISCLKGRNVLDVGCGSGYHMWRMLGEGANRVIGVDPTQLFFIQFHAIKQFIRNSYGPANNIHFLPMGIEDMQPLQAFDTVFSMGVLYHRKDPMAFLQQLKDQLRKGGELILETLVVDGDETTVLMAGERYAQMRNVWFLPSTDALTVWLSRLGFENIRVVDVNHTTLDEQRSTSWMDTQSLKDFLDPEDITRTIEGYPAPQRAVIVANKK</sequence>
<protein>
    <recommendedName>
        <fullName evidence="1">tRNA U34 carboxymethyltransferase</fullName>
        <ecNumber evidence="1">2.5.1.-</ecNumber>
    </recommendedName>
</protein>
<name>CMOB_ALTMD</name>
<evidence type="ECO:0000255" key="1">
    <source>
        <dbReference type="HAMAP-Rule" id="MF_01590"/>
    </source>
</evidence>
<comment type="function">
    <text evidence="1">Catalyzes carboxymethyl transfer from carboxy-S-adenosyl-L-methionine (Cx-SAM) to 5-hydroxyuridine (ho5U) to form 5-carboxymethoxyuridine (cmo5U) at position 34 in tRNAs.</text>
</comment>
<comment type="catalytic activity">
    <reaction evidence="1">
        <text>carboxy-S-adenosyl-L-methionine + 5-hydroxyuridine(34) in tRNA = 5-carboxymethoxyuridine(34) in tRNA + S-adenosyl-L-homocysteine + H(+)</text>
        <dbReference type="Rhea" id="RHEA:52848"/>
        <dbReference type="Rhea" id="RHEA-COMP:13381"/>
        <dbReference type="Rhea" id="RHEA-COMP:13383"/>
        <dbReference type="ChEBI" id="CHEBI:15378"/>
        <dbReference type="ChEBI" id="CHEBI:57856"/>
        <dbReference type="ChEBI" id="CHEBI:134278"/>
        <dbReference type="ChEBI" id="CHEBI:136877"/>
        <dbReference type="ChEBI" id="CHEBI:136879"/>
    </reaction>
</comment>
<comment type="subunit">
    <text evidence="1">Homotetramer.</text>
</comment>
<comment type="similarity">
    <text evidence="1">Belongs to the class I-like SAM-binding methyltransferase superfamily. CmoB family.</text>
</comment>